<feature type="transit peptide" description="Mitochondrion" evidence="2">
    <location>
        <begin position="1"/>
        <end position="11"/>
    </location>
</feature>
<feature type="chain" id="PRO_0000406653" description="MICOS complex subunit MIC60">
    <location>
        <begin position="12"/>
        <end position="671"/>
    </location>
</feature>
<feature type="topological domain" description="Mitochondrial matrix" evidence="2">
    <location>
        <begin position="12"/>
        <end position="141"/>
    </location>
</feature>
<feature type="transmembrane region" description="Helical" evidence="2">
    <location>
        <begin position="142"/>
        <end position="162"/>
    </location>
</feature>
<feature type="topological domain" description="Mitochondrial intermembrane" evidence="2">
    <location>
        <begin position="163"/>
        <end position="671"/>
    </location>
</feature>
<feature type="region of interest" description="Disordered" evidence="3">
    <location>
        <begin position="75"/>
        <end position="135"/>
    </location>
</feature>
<feature type="region of interest" description="Disordered" evidence="3">
    <location>
        <begin position="206"/>
        <end position="299"/>
    </location>
</feature>
<feature type="coiled-coil region" evidence="2">
    <location>
        <begin position="342"/>
        <end position="433"/>
    </location>
</feature>
<feature type="compositionally biased region" description="Pro residues" evidence="3">
    <location>
        <begin position="117"/>
        <end position="133"/>
    </location>
</feature>
<feature type="compositionally biased region" description="Basic and acidic residues" evidence="3">
    <location>
        <begin position="234"/>
        <end position="243"/>
    </location>
</feature>
<feature type="compositionally biased region" description="Basic and acidic residues" evidence="3">
    <location>
        <begin position="253"/>
        <end position="292"/>
    </location>
</feature>
<protein>
    <recommendedName>
        <fullName>MICOS complex subunit MIC60</fullName>
    </recommendedName>
    <alternativeName>
        <fullName>Mitofilin</fullName>
    </alternativeName>
</protein>
<keyword id="KW-0175">Coiled coil</keyword>
<keyword id="KW-0472">Membrane</keyword>
<keyword id="KW-0496">Mitochondrion</keyword>
<keyword id="KW-0999">Mitochondrion inner membrane</keyword>
<keyword id="KW-0809">Transit peptide</keyword>
<keyword id="KW-0812">Transmembrane</keyword>
<keyword id="KW-1133">Transmembrane helix</keyword>
<comment type="function">
    <text evidence="1">Component of the MICOS complex, a large protein complex of the mitochondrial inner membrane that plays crucial roles in the maintenance of crista junctions, inner membrane architecture, and formation of contact sites to the outer membrane. Plays a role in keeping cristae membranes connected to the inner boundary membrane. Also promotes protein import via the mitochondrial intermembrane space assembly (MIA) pathway (By similarity).</text>
</comment>
<comment type="subunit">
    <text evidence="1">Component of the mitochondrial contact site and cristae organizing system (MICOS) complex.</text>
</comment>
<comment type="subcellular location">
    <subcellularLocation>
        <location evidence="1">Mitochondrion inner membrane</location>
        <topology evidence="1">Single-pass membrane protein</topology>
    </subcellularLocation>
</comment>
<comment type="similarity">
    <text evidence="4">Belongs to the MICOS complex subunit Mic60 family.</text>
</comment>
<accession>C5P436</accession>
<evidence type="ECO:0000250" key="1"/>
<evidence type="ECO:0000255" key="2"/>
<evidence type="ECO:0000256" key="3">
    <source>
        <dbReference type="SAM" id="MobiDB-lite"/>
    </source>
</evidence>
<evidence type="ECO:0000305" key="4"/>
<reference key="1">
    <citation type="journal article" date="2009" name="Genome Res.">
        <title>Comparative genomic analyses of the human fungal pathogens Coccidioides and their relatives.</title>
        <authorList>
            <person name="Sharpton T.J."/>
            <person name="Stajich J.E."/>
            <person name="Rounsley S.D."/>
            <person name="Gardner M.J."/>
            <person name="Wortman J.R."/>
            <person name="Jordar V.S."/>
            <person name="Maiti R."/>
            <person name="Kodira C.D."/>
            <person name="Neafsey D.E."/>
            <person name="Zeng Q."/>
            <person name="Hung C.-Y."/>
            <person name="McMahan C."/>
            <person name="Muszewska A."/>
            <person name="Grynberg M."/>
            <person name="Mandel M.A."/>
            <person name="Kellner E.M."/>
            <person name="Barker B.M."/>
            <person name="Galgiani J.N."/>
            <person name="Orbach M.J."/>
            <person name="Kirkland T.N."/>
            <person name="Cole G.T."/>
            <person name="Henn M.R."/>
            <person name="Birren B.W."/>
            <person name="Taylor J.W."/>
        </authorList>
    </citation>
    <scope>NUCLEOTIDE SEQUENCE [LARGE SCALE GENOMIC DNA]</scope>
    <source>
        <strain>C735</strain>
    </source>
</reference>
<gene>
    <name type="primary">MIC60</name>
    <name type="ORF">CPC735_063270</name>
</gene>
<dbReference type="EMBL" id="ACFW01000015">
    <property type="protein sequence ID" value="EER28454.1"/>
    <property type="molecule type" value="Genomic_DNA"/>
</dbReference>
<dbReference type="RefSeq" id="XP_003070599.1">
    <property type="nucleotide sequence ID" value="XM_003070553.1"/>
</dbReference>
<dbReference type="SMR" id="C5P436"/>
<dbReference type="KEGG" id="cpw:9696094"/>
<dbReference type="VEuPathDB" id="FungiDB:CPC735_063270"/>
<dbReference type="HOGENOM" id="CLU_008024_1_2_1"/>
<dbReference type="OrthoDB" id="10261039at2759"/>
<dbReference type="Proteomes" id="UP000009084">
    <property type="component" value="Unassembled WGS sequence"/>
</dbReference>
<dbReference type="GO" id="GO:0061617">
    <property type="term" value="C:MICOS complex"/>
    <property type="evidence" value="ECO:0007669"/>
    <property type="project" value="TreeGrafter"/>
</dbReference>
<dbReference type="GO" id="GO:0042407">
    <property type="term" value="P:cristae formation"/>
    <property type="evidence" value="ECO:0007669"/>
    <property type="project" value="TreeGrafter"/>
</dbReference>
<dbReference type="InterPro" id="IPR019133">
    <property type="entry name" value="MIC60"/>
</dbReference>
<dbReference type="PANTHER" id="PTHR15415:SF7">
    <property type="entry name" value="MICOS COMPLEX SUBUNIT MIC60"/>
    <property type="match status" value="1"/>
</dbReference>
<dbReference type="PANTHER" id="PTHR15415">
    <property type="entry name" value="MITOFILIN"/>
    <property type="match status" value="1"/>
</dbReference>
<dbReference type="Pfam" id="PF09731">
    <property type="entry name" value="Mitofilin"/>
    <property type="match status" value="2"/>
</dbReference>
<sequence length="671" mass="74398">MIRSSIAPSRQLLSPTTGRQWLQSSRVRGGLVGKKHYSRTRKAPVISKAIPTLDGVVLPVRGNNAFTTSAILANDSHVRSPPSPSSESAIAPEGVPRPPQSHPVQTSPGSSVDGRAQPPPETNTPPPPPPPAPKKGGRFRRFLIYLIFTTGLAYAGGIWLSLTSDNFHDFFTEYVPYGEEAVLYVEEQDFRRRFPNAARQITRRVTGPREEGQNVTIPGKSGLSWKVSEEESEAKEAGSDVSRKGKHMSATEVNKEKTAAVEQVKAKKEAAPAIKKETTPAESKKPALEEARSPALPTASPVQPLSIAIEDEPTVQELMRIVNDLISVVNADESSSRFTSTLSKAKADFEKLGERIIAAKQESYKFAQEEIEKARADMEKSANELIRRIDEVRADDAAQFREEYEAERERLARAYQEKIKIELQRVQEVSEQRLRNELVEQAIELNRKFLSDVRSLVENEREGRLSKLSELTANVGELERLTAEWNSVVDTNLTTQQLQVAVDAVRSALENSDIPRPFINELVAVKELAAGDPVVDAAISSISPVAYQRGIPSSAQIIERFRRLATEVRKASLLPENAGIASHAASYMMSKVMFKKQGSEEGDDVESILTRTETLLEEGRLDDAAREMNSLQGWSKILSKDWLADVRRVLEVNQALELIETEARLRCLQVE</sequence>
<name>MIC60_COCP7</name>
<proteinExistence type="inferred from homology"/>
<organism>
    <name type="scientific">Coccidioides posadasii (strain C735)</name>
    <name type="common">Valley fever fungus</name>
    <dbReference type="NCBI Taxonomy" id="222929"/>
    <lineage>
        <taxon>Eukaryota</taxon>
        <taxon>Fungi</taxon>
        <taxon>Dikarya</taxon>
        <taxon>Ascomycota</taxon>
        <taxon>Pezizomycotina</taxon>
        <taxon>Eurotiomycetes</taxon>
        <taxon>Eurotiomycetidae</taxon>
        <taxon>Onygenales</taxon>
        <taxon>Onygenaceae</taxon>
        <taxon>Coccidioides</taxon>
    </lineage>
</organism>